<organism>
    <name type="scientific">Homo sapiens</name>
    <name type="common">Human</name>
    <dbReference type="NCBI Taxonomy" id="9606"/>
    <lineage>
        <taxon>Eukaryota</taxon>
        <taxon>Metazoa</taxon>
        <taxon>Chordata</taxon>
        <taxon>Craniata</taxon>
        <taxon>Vertebrata</taxon>
        <taxon>Euteleostomi</taxon>
        <taxon>Mammalia</taxon>
        <taxon>Eutheria</taxon>
        <taxon>Euarchontoglires</taxon>
        <taxon>Primates</taxon>
        <taxon>Haplorrhini</taxon>
        <taxon>Catarrhini</taxon>
        <taxon>Hominidae</taxon>
        <taxon>Homo</taxon>
    </lineage>
</organism>
<keyword id="KW-0002">3D-structure</keyword>
<keyword id="KW-0025">Alternative splicing</keyword>
<keyword id="KW-0137">Centromere</keyword>
<keyword id="KW-0158">Chromosome</keyword>
<keyword id="KW-0539">Nucleus</keyword>
<keyword id="KW-0597">Phosphoprotein</keyword>
<keyword id="KW-1267">Proteomics identification</keyword>
<keyword id="KW-1185">Reference proteome</keyword>
<name>CENPL_HUMAN</name>
<proteinExistence type="evidence at protein level"/>
<sequence length="344" mass="38998">MDSYSAPESTPSASSRPEDYFIGATPLQKRLESVRKQSSFILTPPRRKIPQCSQLQEDVDPQKVAFLLHKQWTLYSLTPLYKFSYSNLKEYSRLLNAFIVAEKQKGLAVEVGEDFNIKVIFSTLLGMKGTQRDPEAFLVQIVSKSQLPSENREGKVLWTGWFCCVFGDSLLETVSEDFTCLPLFLANGAESNTAIIGTWFQKTFDCYFSPLAINAFNLSWMAAMWTACKMDHYVATTEFLWSVPCSPQSLDISFAIHPEDAKALWDSVHKTPGEVTQEEVDLFMDCLYSHFHRHFKIHLSATRLVRVSTSVASAHTDGKIKILCHKYLIGVLAYLTELAIFQIE</sequence>
<gene>
    <name type="primary">CENPL</name>
    <name type="synonym">C1orf155</name>
    <name type="synonym">ICEN33</name>
</gene>
<comment type="function">
    <text evidence="2">Component of the CENPA-CAD (nucleosome distal) complex, a complex recruited to centromeres which is involved in assembly of kinetochore proteins, mitotic progression and chromosome segregation. May be involved in incorporation of newly synthesized CENPA into centromeres via its interaction with the CENPA-NAC complex.</text>
</comment>
<comment type="subunit">
    <text evidence="1">Component of the CENPA-CAD complex, composed of CENPI, CENPK, CENPL, CENPO, CENPP, CENPQ, CENPR and CENPS. The CENPA-CAD complex interacts with the CENPA-NAC complex, at least composed of CENPA, CENPC, CENPH, CENPM, CENPN, CENPT and CENPU.</text>
</comment>
<comment type="interaction">
    <interactant intactId="EBI-8467109">
        <id>Q8N0S6</id>
    </interactant>
    <interactant intactId="EBI-10175124">
        <id>Q8IZU0</id>
        <label>FAM9B</label>
    </interactant>
    <organismsDiffer>false</organismsDiffer>
    <experiments>3</experiments>
</comment>
<comment type="subcellular location">
    <subcellularLocation>
        <location evidence="2">Nucleus</location>
    </subcellularLocation>
    <subcellularLocation>
        <location evidence="2">Chromosome</location>
        <location evidence="2">Centromere</location>
    </subcellularLocation>
    <text>Localizes exclusively in the centromeres. The CENPA-CAD complex is probably recruited on centromeres by the CENPA-NAC complex.</text>
</comment>
<comment type="alternative products">
    <event type="alternative splicing"/>
    <isoform>
        <id>Q8N0S6-1</id>
        <name>1</name>
        <sequence type="displayed"/>
    </isoform>
    <isoform>
        <id>Q8N0S6-2</id>
        <name>2</name>
        <sequence type="described" ref="VSP_019939"/>
    </isoform>
    <isoform>
        <id>Q8N0S6-3</id>
        <name>3</name>
        <sequence type="described" ref="VSP_019940 VSP_019941"/>
    </isoform>
</comment>
<comment type="similarity">
    <text evidence="5">Belongs to the CENP-L/IML3 family.</text>
</comment>
<feature type="chain" id="PRO_0000247170" description="Centromere protein L">
    <location>
        <begin position="1"/>
        <end position="344"/>
    </location>
</feature>
<feature type="modified residue" description="Phosphoserine" evidence="7">
    <location>
        <position position="39"/>
    </location>
</feature>
<feature type="modified residue" description="Phosphothreonine" evidence="7">
    <location>
        <position position="43"/>
    </location>
</feature>
<feature type="modified residue" description="Phosphoserine" evidence="6">
    <location>
        <position position="53"/>
    </location>
</feature>
<feature type="splice variant" id="VSP_019939" description="In isoform 2." evidence="4">
    <original>Q</original>
    <variation>QGLILSPRLEYSGTILVDCNLCLLGSSDPSTLAFQVAGTAGACHHTR</variation>
    <location>
        <position position="140"/>
    </location>
</feature>
<feature type="splice variant" id="VSP_019940" description="In isoform 3." evidence="3">
    <original>IVSKSQLPSENREGKVLWTGWFCCVFGDSLLETVSEDFTCLPLFLANG</original>
    <variation>GLILSPRLEYSGTILVDCNLCLLGSSDPSTLAFQVAGTADCVKISIAI</variation>
    <location>
        <begin position="141"/>
        <end position="188"/>
    </location>
</feature>
<feature type="splice variant" id="VSP_019941" description="In isoform 3." evidence="3">
    <location>
        <begin position="189"/>
        <end position="344"/>
    </location>
</feature>
<feature type="sequence variant" id="VAR_027081" description="In dbSNP:rs12086855.">
    <original>I</original>
    <variation>F</variation>
    <location>
        <position position="117"/>
    </location>
</feature>
<feature type="helix" evidence="8">
    <location>
        <begin position="27"/>
        <end position="36"/>
    </location>
</feature>
<feature type="strand" evidence="8">
    <location>
        <begin position="40"/>
        <end position="42"/>
    </location>
</feature>
<feature type="helix" evidence="8">
    <location>
        <begin position="61"/>
        <end position="67"/>
    </location>
</feature>
<feature type="strand" evidence="8">
    <location>
        <begin position="68"/>
        <end position="70"/>
    </location>
</feature>
<feature type="strand" evidence="8">
    <location>
        <begin position="72"/>
        <end position="77"/>
    </location>
</feature>
<feature type="strand" evidence="8">
    <location>
        <begin position="80"/>
        <end position="82"/>
    </location>
</feature>
<feature type="helix" evidence="8">
    <location>
        <begin position="89"/>
        <end position="103"/>
    </location>
</feature>
<feature type="strand" evidence="8">
    <location>
        <begin position="104"/>
        <end position="107"/>
    </location>
</feature>
<feature type="strand" evidence="8">
    <location>
        <begin position="109"/>
        <end position="112"/>
    </location>
</feature>
<feature type="strand" evidence="8">
    <location>
        <begin position="116"/>
        <end position="123"/>
    </location>
</feature>
<feature type="strand" evidence="8">
    <location>
        <begin position="137"/>
        <end position="143"/>
    </location>
</feature>
<feature type="strand" evidence="8">
    <location>
        <begin position="155"/>
        <end position="163"/>
    </location>
</feature>
<feature type="helix" evidence="8">
    <location>
        <begin position="168"/>
        <end position="171"/>
    </location>
</feature>
<feature type="strand" evidence="8">
    <location>
        <begin position="183"/>
        <end position="188"/>
    </location>
</feature>
<feature type="helix" evidence="8">
    <location>
        <begin position="190"/>
        <end position="204"/>
    </location>
</feature>
<feature type="strand" evidence="8">
    <location>
        <begin position="208"/>
        <end position="210"/>
    </location>
</feature>
<feature type="helix" evidence="8">
    <location>
        <begin position="215"/>
        <end position="226"/>
    </location>
</feature>
<feature type="strand" evidence="8">
    <location>
        <begin position="237"/>
        <end position="242"/>
    </location>
</feature>
<feature type="strand" evidence="8">
    <location>
        <begin position="251"/>
        <end position="256"/>
    </location>
</feature>
<feature type="helix" evidence="8">
    <location>
        <begin position="258"/>
        <end position="268"/>
    </location>
</feature>
<feature type="strand" evidence="9">
    <location>
        <begin position="271"/>
        <end position="275"/>
    </location>
</feature>
<feature type="helix" evidence="8">
    <location>
        <begin position="277"/>
        <end position="295"/>
    </location>
</feature>
<feature type="helix" evidence="8">
    <location>
        <begin position="299"/>
        <end position="301"/>
    </location>
</feature>
<feature type="strand" evidence="8">
    <location>
        <begin position="302"/>
        <end position="308"/>
    </location>
</feature>
<feature type="strand" evidence="8">
    <location>
        <begin position="310"/>
        <end position="315"/>
    </location>
</feature>
<feature type="turn" evidence="8">
    <location>
        <begin position="316"/>
        <end position="318"/>
    </location>
</feature>
<feature type="strand" evidence="8">
    <location>
        <begin position="319"/>
        <end position="322"/>
    </location>
</feature>
<feature type="strand" evidence="8">
    <location>
        <begin position="325"/>
        <end position="327"/>
    </location>
</feature>
<feature type="helix" evidence="8">
    <location>
        <begin position="328"/>
        <end position="343"/>
    </location>
</feature>
<evidence type="ECO:0000269" key="1">
    <source>
    </source>
</evidence>
<evidence type="ECO:0000269" key="2">
    <source>
    </source>
</evidence>
<evidence type="ECO:0000303" key="3">
    <source>
    </source>
</evidence>
<evidence type="ECO:0000303" key="4">
    <source>
    </source>
</evidence>
<evidence type="ECO:0000305" key="5"/>
<evidence type="ECO:0007744" key="6">
    <source>
    </source>
</evidence>
<evidence type="ECO:0007744" key="7">
    <source>
    </source>
</evidence>
<evidence type="ECO:0007829" key="8">
    <source>
        <dbReference type="PDB" id="7R5S"/>
    </source>
</evidence>
<evidence type="ECO:0007829" key="9">
    <source>
        <dbReference type="PDB" id="7XHO"/>
    </source>
</evidence>
<accession>Q8N0S6</accession>
<accession>Q5TEL5</accession>
<accession>Q96ND4</accession>
<protein>
    <recommendedName>
        <fullName>Centromere protein L</fullName>
        <shortName>CENP-L</shortName>
    </recommendedName>
    <alternativeName>
        <fullName>Interphase centromere complex protein 33</fullName>
    </alternativeName>
</protein>
<reference key="1">
    <citation type="journal article" date="2004" name="Nat. Genet.">
        <title>Complete sequencing and characterization of 21,243 full-length human cDNAs.</title>
        <authorList>
            <person name="Ota T."/>
            <person name="Suzuki Y."/>
            <person name="Nishikawa T."/>
            <person name="Otsuki T."/>
            <person name="Sugiyama T."/>
            <person name="Irie R."/>
            <person name="Wakamatsu A."/>
            <person name="Hayashi K."/>
            <person name="Sato H."/>
            <person name="Nagai K."/>
            <person name="Kimura K."/>
            <person name="Makita H."/>
            <person name="Sekine M."/>
            <person name="Obayashi M."/>
            <person name="Nishi T."/>
            <person name="Shibahara T."/>
            <person name="Tanaka T."/>
            <person name="Ishii S."/>
            <person name="Yamamoto J."/>
            <person name="Saito K."/>
            <person name="Kawai Y."/>
            <person name="Isono Y."/>
            <person name="Nakamura Y."/>
            <person name="Nagahari K."/>
            <person name="Murakami K."/>
            <person name="Yasuda T."/>
            <person name="Iwayanagi T."/>
            <person name="Wagatsuma M."/>
            <person name="Shiratori A."/>
            <person name="Sudo H."/>
            <person name="Hosoiri T."/>
            <person name="Kaku Y."/>
            <person name="Kodaira H."/>
            <person name="Kondo H."/>
            <person name="Sugawara M."/>
            <person name="Takahashi M."/>
            <person name="Kanda K."/>
            <person name="Yokoi T."/>
            <person name="Furuya T."/>
            <person name="Kikkawa E."/>
            <person name="Omura Y."/>
            <person name="Abe K."/>
            <person name="Kamihara K."/>
            <person name="Katsuta N."/>
            <person name="Sato K."/>
            <person name="Tanikawa M."/>
            <person name="Yamazaki M."/>
            <person name="Ninomiya K."/>
            <person name="Ishibashi T."/>
            <person name="Yamashita H."/>
            <person name="Murakawa K."/>
            <person name="Fujimori K."/>
            <person name="Tanai H."/>
            <person name="Kimata M."/>
            <person name="Watanabe M."/>
            <person name="Hiraoka S."/>
            <person name="Chiba Y."/>
            <person name="Ishida S."/>
            <person name="Ono Y."/>
            <person name="Takiguchi S."/>
            <person name="Watanabe S."/>
            <person name="Yosida M."/>
            <person name="Hotuta T."/>
            <person name="Kusano J."/>
            <person name="Kanehori K."/>
            <person name="Takahashi-Fujii A."/>
            <person name="Hara H."/>
            <person name="Tanase T.-O."/>
            <person name="Nomura Y."/>
            <person name="Togiya S."/>
            <person name="Komai F."/>
            <person name="Hara R."/>
            <person name="Takeuchi K."/>
            <person name="Arita M."/>
            <person name="Imose N."/>
            <person name="Musashino K."/>
            <person name="Yuuki H."/>
            <person name="Oshima A."/>
            <person name="Sasaki N."/>
            <person name="Aotsuka S."/>
            <person name="Yoshikawa Y."/>
            <person name="Matsunawa H."/>
            <person name="Ichihara T."/>
            <person name="Shiohata N."/>
            <person name="Sano S."/>
            <person name="Moriya S."/>
            <person name="Momiyama H."/>
            <person name="Satoh N."/>
            <person name="Takami S."/>
            <person name="Terashima Y."/>
            <person name="Suzuki O."/>
            <person name="Nakagawa S."/>
            <person name="Senoh A."/>
            <person name="Mizoguchi H."/>
            <person name="Goto Y."/>
            <person name="Shimizu F."/>
            <person name="Wakebe H."/>
            <person name="Hishigaki H."/>
            <person name="Watanabe T."/>
            <person name="Sugiyama A."/>
            <person name="Takemoto M."/>
            <person name="Kawakami B."/>
            <person name="Yamazaki M."/>
            <person name="Watanabe K."/>
            <person name="Kumagai A."/>
            <person name="Itakura S."/>
            <person name="Fukuzumi Y."/>
            <person name="Fujimori Y."/>
            <person name="Komiyama M."/>
            <person name="Tashiro H."/>
            <person name="Tanigami A."/>
            <person name="Fujiwara T."/>
            <person name="Ono T."/>
            <person name="Yamada K."/>
            <person name="Fujii Y."/>
            <person name="Ozaki K."/>
            <person name="Hirao M."/>
            <person name="Ohmori Y."/>
            <person name="Kawabata A."/>
            <person name="Hikiji T."/>
            <person name="Kobatake N."/>
            <person name="Inagaki H."/>
            <person name="Ikema Y."/>
            <person name="Okamoto S."/>
            <person name="Okitani R."/>
            <person name="Kawakami T."/>
            <person name="Noguchi S."/>
            <person name="Itoh T."/>
            <person name="Shigeta K."/>
            <person name="Senba T."/>
            <person name="Matsumura K."/>
            <person name="Nakajima Y."/>
            <person name="Mizuno T."/>
            <person name="Morinaga M."/>
            <person name="Sasaki M."/>
            <person name="Togashi T."/>
            <person name="Oyama M."/>
            <person name="Hata H."/>
            <person name="Watanabe M."/>
            <person name="Komatsu T."/>
            <person name="Mizushima-Sugano J."/>
            <person name="Satoh T."/>
            <person name="Shirai Y."/>
            <person name="Takahashi Y."/>
            <person name="Nakagawa K."/>
            <person name="Okumura K."/>
            <person name="Nagase T."/>
            <person name="Nomura N."/>
            <person name="Kikuchi H."/>
            <person name="Masuho Y."/>
            <person name="Yamashita R."/>
            <person name="Nakai K."/>
            <person name="Yada T."/>
            <person name="Nakamura Y."/>
            <person name="Ohara O."/>
            <person name="Isogai T."/>
            <person name="Sugano S."/>
        </authorList>
    </citation>
    <scope>NUCLEOTIDE SEQUENCE [LARGE SCALE MRNA] (ISOFORM 3)</scope>
    <source>
        <tissue>Synovial cell</tissue>
    </source>
</reference>
<reference key="2">
    <citation type="journal article" date="2006" name="Nature">
        <title>The DNA sequence and biological annotation of human chromosome 1.</title>
        <authorList>
            <person name="Gregory S.G."/>
            <person name="Barlow K.F."/>
            <person name="McLay K.E."/>
            <person name="Kaul R."/>
            <person name="Swarbreck D."/>
            <person name="Dunham A."/>
            <person name="Scott C.E."/>
            <person name="Howe K.L."/>
            <person name="Woodfine K."/>
            <person name="Spencer C.C.A."/>
            <person name="Jones M.C."/>
            <person name="Gillson C."/>
            <person name="Searle S."/>
            <person name="Zhou Y."/>
            <person name="Kokocinski F."/>
            <person name="McDonald L."/>
            <person name="Evans R."/>
            <person name="Phillips K."/>
            <person name="Atkinson A."/>
            <person name="Cooper R."/>
            <person name="Jones C."/>
            <person name="Hall R.E."/>
            <person name="Andrews T.D."/>
            <person name="Lloyd C."/>
            <person name="Ainscough R."/>
            <person name="Almeida J.P."/>
            <person name="Ambrose K.D."/>
            <person name="Anderson F."/>
            <person name="Andrew R.W."/>
            <person name="Ashwell R.I.S."/>
            <person name="Aubin K."/>
            <person name="Babbage A.K."/>
            <person name="Bagguley C.L."/>
            <person name="Bailey J."/>
            <person name="Beasley H."/>
            <person name="Bethel G."/>
            <person name="Bird C.P."/>
            <person name="Bray-Allen S."/>
            <person name="Brown J.Y."/>
            <person name="Brown A.J."/>
            <person name="Buckley D."/>
            <person name="Burton J."/>
            <person name="Bye J."/>
            <person name="Carder C."/>
            <person name="Chapman J.C."/>
            <person name="Clark S.Y."/>
            <person name="Clarke G."/>
            <person name="Clee C."/>
            <person name="Cobley V."/>
            <person name="Collier R.E."/>
            <person name="Corby N."/>
            <person name="Coville G.J."/>
            <person name="Davies J."/>
            <person name="Deadman R."/>
            <person name="Dunn M."/>
            <person name="Earthrowl M."/>
            <person name="Ellington A.G."/>
            <person name="Errington H."/>
            <person name="Frankish A."/>
            <person name="Frankland J."/>
            <person name="French L."/>
            <person name="Garner P."/>
            <person name="Garnett J."/>
            <person name="Gay L."/>
            <person name="Ghori M.R.J."/>
            <person name="Gibson R."/>
            <person name="Gilby L.M."/>
            <person name="Gillett W."/>
            <person name="Glithero R.J."/>
            <person name="Grafham D.V."/>
            <person name="Griffiths C."/>
            <person name="Griffiths-Jones S."/>
            <person name="Grocock R."/>
            <person name="Hammond S."/>
            <person name="Harrison E.S.I."/>
            <person name="Hart E."/>
            <person name="Haugen E."/>
            <person name="Heath P.D."/>
            <person name="Holmes S."/>
            <person name="Holt K."/>
            <person name="Howden P.J."/>
            <person name="Hunt A.R."/>
            <person name="Hunt S.E."/>
            <person name="Hunter G."/>
            <person name="Isherwood J."/>
            <person name="James R."/>
            <person name="Johnson C."/>
            <person name="Johnson D."/>
            <person name="Joy A."/>
            <person name="Kay M."/>
            <person name="Kershaw J.K."/>
            <person name="Kibukawa M."/>
            <person name="Kimberley A.M."/>
            <person name="King A."/>
            <person name="Knights A.J."/>
            <person name="Lad H."/>
            <person name="Laird G."/>
            <person name="Lawlor S."/>
            <person name="Leongamornlert D.A."/>
            <person name="Lloyd D.M."/>
            <person name="Loveland J."/>
            <person name="Lovell J."/>
            <person name="Lush M.J."/>
            <person name="Lyne R."/>
            <person name="Martin S."/>
            <person name="Mashreghi-Mohammadi M."/>
            <person name="Matthews L."/>
            <person name="Matthews N.S.W."/>
            <person name="McLaren S."/>
            <person name="Milne S."/>
            <person name="Mistry S."/>
            <person name="Moore M.J.F."/>
            <person name="Nickerson T."/>
            <person name="O'Dell C.N."/>
            <person name="Oliver K."/>
            <person name="Palmeiri A."/>
            <person name="Palmer S.A."/>
            <person name="Parker A."/>
            <person name="Patel D."/>
            <person name="Pearce A.V."/>
            <person name="Peck A.I."/>
            <person name="Pelan S."/>
            <person name="Phelps K."/>
            <person name="Phillimore B.J."/>
            <person name="Plumb R."/>
            <person name="Rajan J."/>
            <person name="Raymond C."/>
            <person name="Rouse G."/>
            <person name="Saenphimmachak C."/>
            <person name="Sehra H.K."/>
            <person name="Sheridan E."/>
            <person name="Shownkeen R."/>
            <person name="Sims S."/>
            <person name="Skuce C.D."/>
            <person name="Smith M."/>
            <person name="Steward C."/>
            <person name="Subramanian S."/>
            <person name="Sycamore N."/>
            <person name="Tracey A."/>
            <person name="Tromans A."/>
            <person name="Van Helmond Z."/>
            <person name="Wall M."/>
            <person name="Wallis J.M."/>
            <person name="White S."/>
            <person name="Whitehead S.L."/>
            <person name="Wilkinson J.E."/>
            <person name="Willey D.L."/>
            <person name="Williams H."/>
            <person name="Wilming L."/>
            <person name="Wray P.W."/>
            <person name="Wu Z."/>
            <person name="Coulson A."/>
            <person name="Vaudin M."/>
            <person name="Sulston J.E."/>
            <person name="Durbin R.M."/>
            <person name="Hubbard T."/>
            <person name="Wooster R."/>
            <person name="Dunham I."/>
            <person name="Carter N.P."/>
            <person name="McVean G."/>
            <person name="Ross M.T."/>
            <person name="Harrow J."/>
            <person name="Olson M.V."/>
            <person name="Beck S."/>
            <person name="Rogers J."/>
            <person name="Bentley D.R."/>
        </authorList>
    </citation>
    <scope>NUCLEOTIDE SEQUENCE [LARGE SCALE GENOMIC DNA]</scope>
</reference>
<reference key="3">
    <citation type="journal article" date="2004" name="Genome Res.">
        <title>The status, quality, and expansion of the NIH full-length cDNA project: the Mammalian Gene Collection (MGC).</title>
        <authorList>
            <consortium name="The MGC Project Team"/>
        </authorList>
    </citation>
    <scope>NUCLEOTIDE SEQUENCE [LARGE SCALE MRNA] (ISOFORMS 1 AND 2)</scope>
    <source>
        <tissue>Eye</tissue>
        <tissue>Muscle</tissue>
        <tissue>Urinary bladder</tissue>
    </source>
</reference>
<reference key="4">
    <citation type="journal article" date="2006" name="Genes Cells">
        <title>Comprehensive analysis of the ICEN (Interphase Centromere Complex) components enriched in the CENP-A chromatin of human cells.</title>
        <authorList>
            <person name="Izuta H."/>
            <person name="Ikeno M."/>
            <person name="Suzuki N."/>
            <person name="Tomonaga T."/>
            <person name="Nozaki N."/>
            <person name="Obuse C."/>
            <person name="Kisu Y."/>
            <person name="Goshima N."/>
            <person name="Nomura F."/>
            <person name="Nomura N."/>
            <person name="Yoda K."/>
        </authorList>
    </citation>
    <scope>FUNCTION</scope>
    <scope>SUBCELLULAR LOCATION</scope>
</reference>
<reference key="5">
    <citation type="journal article" date="2006" name="Nat. Cell Biol.">
        <title>The human CENP-A centromeric nucleosome-associated complex.</title>
        <authorList>
            <person name="Foltz D.R."/>
            <person name="Jansen L.E.T."/>
            <person name="Black B.E."/>
            <person name="Bailey A.O."/>
            <person name="Yates J.R. III"/>
            <person name="Cleveland D.W."/>
        </authorList>
    </citation>
    <scope>IDENTIFICATION BY MASS SPECTROMETRY</scope>
    <scope>IDENTIFICATION IN THE CENPA-CAD COMPLEX WITH CENPI; CENPK; CENPO; CENPP; CENPQ; CENPR AND CENPS</scope>
</reference>
<reference key="6">
    <citation type="journal article" date="2010" name="Sci. Signal.">
        <title>Quantitative phosphoproteomics reveals widespread full phosphorylation site occupancy during mitosis.</title>
        <authorList>
            <person name="Olsen J.V."/>
            <person name="Vermeulen M."/>
            <person name="Santamaria A."/>
            <person name="Kumar C."/>
            <person name="Miller M.L."/>
            <person name="Jensen L.J."/>
            <person name="Gnad F."/>
            <person name="Cox J."/>
            <person name="Jensen T.S."/>
            <person name="Nigg E.A."/>
            <person name="Brunak S."/>
            <person name="Mann M."/>
        </authorList>
    </citation>
    <scope>PHOSPHORYLATION [LARGE SCALE ANALYSIS] AT SER-53</scope>
    <scope>IDENTIFICATION BY MASS SPECTROMETRY [LARGE SCALE ANALYSIS]</scope>
    <source>
        <tissue>Cervix carcinoma</tissue>
    </source>
</reference>
<reference key="7">
    <citation type="journal article" date="2013" name="J. Proteome Res.">
        <title>Toward a comprehensive characterization of a human cancer cell phosphoproteome.</title>
        <authorList>
            <person name="Zhou H."/>
            <person name="Di Palma S."/>
            <person name="Preisinger C."/>
            <person name="Peng M."/>
            <person name="Polat A.N."/>
            <person name="Heck A.J."/>
            <person name="Mohammed S."/>
        </authorList>
    </citation>
    <scope>PHOSPHORYLATION [LARGE SCALE ANALYSIS] AT SER-39 AND THR-43</scope>
    <scope>IDENTIFICATION BY MASS SPECTROMETRY [LARGE SCALE ANALYSIS]</scope>
    <source>
        <tissue>Erythroleukemia</tissue>
    </source>
</reference>
<dbReference type="EMBL" id="AK055606">
    <property type="protein sequence ID" value="BAB70968.1"/>
    <property type="molecule type" value="mRNA"/>
</dbReference>
<dbReference type="EMBL" id="AL109921">
    <property type="status" value="NOT_ANNOTATED_CDS"/>
    <property type="molecule type" value="Genomic_DNA"/>
</dbReference>
<dbReference type="EMBL" id="BC007071">
    <property type="protein sequence ID" value="AAH07071.1"/>
    <property type="molecule type" value="mRNA"/>
</dbReference>
<dbReference type="EMBL" id="BC033154">
    <property type="protein sequence ID" value="AAH33154.1"/>
    <property type="molecule type" value="mRNA"/>
</dbReference>
<dbReference type="EMBL" id="BC066658">
    <property type="protein sequence ID" value="AAH66658.1"/>
    <property type="molecule type" value="mRNA"/>
</dbReference>
<dbReference type="CCDS" id="CCDS30938.1">
    <molecule id="Q8N0S6-1"/>
</dbReference>
<dbReference type="CCDS" id="CCDS44277.1">
    <molecule id="Q8N0S6-2"/>
</dbReference>
<dbReference type="RefSeq" id="NP_001120653.1">
    <molecule id="Q8N0S6-2"/>
    <property type="nucleotide sequence ID" value="NM_001127181.3"/>
</dbReference>
<dbReference type="RefSeq" id="NP_001164653.1">
    <molecule id="Q8N0S6-1"/>
    <property type="nucleotide sequence ID" value="NM_001171182.2"/>
</dbReference>
<dbReference type="RefSeq" id="NP_001374213.1">
    <molecule id="Q8N0S6-2"/>
    <property type="nucleotide sequence ID" value="NM_001387284.1"/>
</dbReference>
<dbReference type="RefSeq" id="NP_001374214.1">
    <molecule id="Q8N0S6-2"/>
    <property type="nucleotide sequence ID" value="NM_001387285.1"/>
</dbReference>
<dbReference type="RefSeq" id="NP_001374215.1">
    <molecule id="Q8N0S6-2"/>
    <property type="nucleotide sequence ID" value="NM_001387286.1"/>
</dbReference>
<dbReference type="RefSeq" id="NP_001374216.1">
    <molecule id="Q8N0S6-1"/>
    <property type="nucleotide sequence ID" value="NM_001387287.1"/>
</dbReference>
<dbReference type="RefSeq" id="NP_001374217.1">
    <molecule id="Q8N0S6-1"/>
    <property type="nucleotide sequence ID" value="NM_001387288.1"/>
</dbReference>
<dbReference type="RefSeq" id="NP_001374218.1">
    <molecule id="Q8N0S6-1"/>
    <property type="nucleotide sequence ID" value="NM_001387289.1"/>
</dbReference>
<dbReference type="RefSeq" id="NP_001374219.1">
    <molecule id="Q8N0S6-1"/>
    <property type="nucleotide sequence ID" value="NM_001387290.1"/>
</dbReference>
<dbReference type="RefSeq" id="NP_201576.1">
    <molecule id="Q8N0S6-1"/>
    <property type="nucleotide sequence ID" value="NM_033319.4"/>
</dbReference>
<dbReference type="PDB" id="7PKN">
    <property type="method" value="EM"/>
    <property type="resolution" value="3.20 A"/>
    <property type="chains" value="L=1-344"/>
</dbReference>
<dbReference type="PDB" id="7QOO">
    <property type="method" value="EM"/>
    <property type="resolution" value="4.60 A"/>
    <property type="chains" value="L=1-344"/>
</dbReference>
<dbReference type="PDB" id="7R5S">
    <property type="method" value="EM"/>
    <property type="resolution" value="2.83 A"/>
    <property type="chains" value="L=1-344"/>
</dbReference>
<dbReference type="PDB" id="7R5V">
    <property type="method" value="EM"/>
    <property type="resolution" value="4.55 A"/>
    <property type="chains" value="L=1-344"/>
</dbReference>
<dbReference type="PDB" id="7XHN">
    <property type="method" value="EM"/>
    <property type="resolution" value="3.71 A"/>
    <property type="chains" value="L=1-344"/>
</dbReference>
<dbReference type="PDB" id="7XHO">
    <property type="method" value="EM"/>
    <property type="resolution" value="3.29 A"/>
    <property type="chains" value="L=1-344"/>
</dbReference>
<dbReference type="PDB" id="7YWX">
    <property type="method" value="EM"/>
    <property type="resolution" value="12.00 A"/>
    <property type="chains" value="L=1-344"/>
</dbReference>
<dbReference type="PDB" id="7YYH">
    <property type="method" value="EM"/>
    <property type="resolution" value="8.90 A"/>
    <property type="chains" value="L=1-344"/>
</dbReference>
<dbReference type="PDBsum" id="7PKN"/>
<dbReference type="PDBsum" id="7QOO"/>
<dbReference type="PDBsum" id="7R5S"/>
<dbReference type="PDBsum" id="7R5V"/>
<dbReference type="PDBsum" id="7XHN"/>
<dbReference type="PDBsum" id="7XHO"/>
<dbReference type="PDBsum" id="7YWX"/>
<dbReference type="PDBsum" id="7YYH"/>
<dbReference type="EMDB" id="EMD-13473"/>
<dbReference type="EMDB" id="EMD-14098"/>
<dbReference type="EMDB" id="EMD-14336"/>
<dbReference type="EMDB" id="EMD-14341"/>
<dbReference type="EMDB" id="EMD-14351"/>
<dbReference type="EMDB" id="EMD-14375"/>
<dbReference type="EMDB" id="EMD-33196"/>
<dbReference type="EMDB" id="EMD-33197"/>
<dbReference type="EMDB" id="EMD-7318"/>
<dbReference type="SMR" id="Q8N0S6"/>
<dbReference type="BioGRID" id="124865">
    <property type="interactions" value="24"/>
</dbReference>
<dbReference type="ComplexPortal" id="CPX-5646">
    <property type="entry name" value="Kinetochore CCAN complex"/>
</dbReference>
<dbReference type="CORUM" id="Q8N0S6"/>
<dbReference type="FunCoup" id="Q8N0S6">
    <property type="interactions" value="2900"/>
</dbReference>
<dbReference type="IntAct" id="Q8N0S6">
    <property type="interactions" value="12"/>
</dbReference>
<dbReference type="MINT" id="Q8N0S6"/>
<dbReference type="STRING" id="9606.ENSP00000348527"/>
<dbReference type="GlyGen" id="Q8N0S6">
    <property type="glycosylation" value="1 site"/>
</dbReference>
<dbReference type="iPTMnet" id="Q8N0S6"/>
<dbReference type="PhosphoSitePlus" id="Q8N0S6"/>
<dbReference type="BioMuta" id="CENPL"/>
<dbReference type="DMDM" id="110832790"/>
<dbReference type="jPOST" id="Q8N0S6"/>
<dbReference type="MassIVE" id="Q8N0S6"/>
<dbReference type="PeptideAtlas" id="Q8N0S6"/>
<dbReference type="ProteomicsDB" id="71450">
    <molecule id="Q8N0S6-1"/>
</dbReference>
<dbReference type="ProteomicsDB" id="71451">
    <molecule id="Q8N0S6-2"/>
</dbReference>
<dbReference type="ProteomicsDB" id="71452">
    <molecule id="Q8N0S6-3"/>
</dbReference>
<dbReference type="Pumba" id="Q8N0S6"/>
<dbReference type="Antibodypedia" id="47079">
    <property type="antibodies" value="68 antibodies from 22 providers"/>
</dbReference>
<dbReference type="DNASU" id="91687"/>
<dbReference type="Ensembl" id="ENST00000345664.10">
    <molecule id="Q8N0S6-1"/>
    <property type="protein sequence ID" value="ENSP00000323543.7"/>
    <property type="gene ID" value="ENSG00000120334.16"/>
</dbReference>
<dbReference type="Ensembl" id="ENST00000356198.6">
    <molecule id="Q8N0S6-2"/>
    <property type="protein sequence ID" value="ENSP00000348527.2"/>
    <property type="gene ID" value="ENSG00000120334.16"/>
</dbReference>
<dbReference type="Ensembl" id="ENST00000367710.7">
    <molecule id="Q8N0S6-1"/>
    <property type="protein sequence ID" value="ENSP00000356683.3"/>
    <property type="gene ID" value="ENSG00000120334.16"/>
</dbReference>
<dbReference type="Ensembl" id="ENST00000682279.1">
    <molecule id="Q8N0S6-1"/>
    <property type="protein sequence ID" value="ENSP00000507473.1"/>
    <property type="gene ID" value="ENSG00000120334.16"/>
</dbReference>
<dbReference type="GeneID" id="91687"/>
<dbReference type="KEGG" id="hsa:91687"/>
<dbReference type="MANE-Select" id="ENST00000682279.1">
    <property type="protein sequence ID" value="ENSP00000507473.1"/>
    <property type="RefSeq nucleotide sequence ID" value="NM_001387287.1"/>
    <property type="RefSeq protein sequence ID" value="NP_001374216.1"/>
</dbReference>
<dbReference type="UCSC" id="uc001gje.5">
    <molecule id="Q8N0S6-1"/>
    <property type="organism name" value="human"/>
</dbReference>
<dbReference type="AGR" id="HGNC:17879"/>
<dbReference type="CTD" id="91687"/>
<dbReference type="DisGeNET" id="91687"/>
<dbReference type="GeneCards" id="CENPL"/>
<dbReference type="HGNC" id="HGNC:17879">
    <property type="gene designation" value="CENPL"/>
</dbReference>
<dbReference type="HPA" id="ENSG00000120334">
    <property type="expression patterns" value="Tissue enhanced (bone marrow, testis)"/>
</dbReference>
<dbReference type="MIM" id="611503">
    <property type="type" value="gene"/>
</dbReference>
<dbReference type="neXtProt" id="NX_Q8N0S6"/>
<dbReference type="OpenTargets" id="ENSG00000120334"/>
<dbReference type="PharmGKB" id="PA142672406"/>
<dbReference type="VEuPathDB" id="HostDB:ENSG00000120334"/>
<dbReference type="GeneTree" id="ENSGT00390000013877"/>
<dbReference type="HOGENOM" id="CLU_070598_0_0_1"/>
<dbReference type="InParanoid" id="Q8N0S6"/>
<dbReference type="OMA" id="TACKMDQ"/>
<dbReference type="OrthoDB" id="8864979at2759"/>
<dbReference type="PAN-GO" id="Q8N0S6">
    <property type="GO annotations" value="0 GO annotations based on evolutionary models"/>
</dbReference>
<dbReference type="PhylomeDB" id="Q8N0S6"/>
<dbReference type="TreeFam" id="TF329688"/>
<dbReference type="PathwayCommons" id="Q8N0S6"/>
<dbReference type="Reactome" id="R-HSA-141444">
    <property type="pathway name" value="Amplification of signal from unattached kinetochores via a MAD2 inhibitory signal"/>
</dbReference>
<dbReference type="Reactome" id="R-HSA-2467813">
    <property type="pathway name" value="Separation of Sister Chromatids"/>
</dbReference>
<dbReference type="Reactome" id="R-HSA-2500257">
    <property type="pathway name" value="Resolution of Sister Chromatid Cohesion"/>
</dbReference>
<dbReference type="Reactome" id="R-HSA-5663220">
    <property type="pathway name" value="RHO GTPases Activate Formins"/>
</dbReference>
<dbReference type="Reactome" id="R-HSA-606279">
    <property type="pathway name" value="Deposition of new CENPA-containing nucleosomes at the centromere"/>
</dbReference>
<dbReference type="Reactome" id="R-HSA-68877">
    <property type="pathway name" value="Mitotic Prometaphase"/>
</dbReference>
<dbReference type="Reactome" id="R-HSA-9648025">
    <property type="pathway name" value="EML4 and NUDC in mitotic spindle formation"/>
</dbReference>
<dbReference type="SignaLink" id="Q8N0S6"/>
<dbReference type="SIGNOR" id="Q8N0S6"/>
<dbReference type="BioGRID-ORCS" id="91687">
    <property type="hits" value="365 hits in 1167 CRISPR screens"/>
</dbReference>
<dbReference type="ChiTaRS" id="CENPL">
    <property type="organism name" value="human"/>
</dbReference>
<dbReference type="GeneWiki" id="CENPL"/>
<dbReference type="GenomeRNAi" id="91687"/>
<dbReference type="Pharos" id="Q8N0S6">
    <property type="development level" value="Tbio"/>
</dbReference>
<dbReference type="PRO" id="PR:Q8N0S6"/>
<dbReference type="Proteomes" id="UP000005640">
    <property type="component" value="Chromosome 1"/>
</dbReference>
<dbReference type="RNAct" id="Q8N0S6">
    <property type="molecule type" value="protein"/>
</dbReference>
<dbReference type="Bgee" id="ENSG00000120334">
    <property type="expression patterns" value="Expressed in oocyte and 147 other cell types or tissues"/>
</dbReference>
<dbReference type="ExpressionAtlas" id="Q8N0S6">
    <property type="expression patterns" value="baseline and differential"/>
</dbReference>
<dbReference type="GO" id="GO:0005829">
    <property type="term" value="C:cytosol"/>
    <property type="evidence" value="ECO:0000304"/>
    <property type="project" value="Reactome"/>
</dbReference>
<dbReference type="GO" id="GO:0000939">
    <property type="term" value="C:inner kinetochore"/>
    <property type="evidence" value="ECO:0000353"/>
    <property type="project" value="ComplexPortal"/>
</dbReference>
<dbReference type="GO" id="GO:0005654">
    <property type="term" value="C:nucleoplasm"/>
    <property type="evidence" value="ECO:0000304"/>
    <property type="project" value="Reactome"/>
</dbReference>
<dbReference type="GO" id="GO:0005634">
    <property type="term" value="C:nucleus"/>
    <property type="evidence" value="ECO:0000303"/>
    <property type="project" value="ComplexPortal"/>
</dbReference>
<dbReference type="GO" id="GO:0007059">
    <property type="term" value="P:chromosome segregation"/>
    <property type="evidence" value="ECO:0000303"/>
    <property type="project" value="ComplexPortal"/>
</dbReference>
<dbReference type="InterPro" id="IPR025204">
    <property type="entry name" value="CENP-L"/>
</dbReference>
<dbReference type="PANTHER" id="PTHR31740">
    <property type="entry name" value="CENTROMERE PROTEIN L"/>
    <property type="match status" value="1"/>
</dbReference>
<dbReference type="PANTHER" id="PTHR31740:SF2">
    <property type="entry name" value="CENTROMERE PROTEIN L"/>
    <property type="match status" value="1"/>
</dbReference>
<dbReference type="Pfam" id="PF13092">
    <property type="entry name" value="CENP-L"/>
    <property type="match status" value="1"/>
</dbReference>